<feature type="chain" id="PRO_1000065293" description="Acetyl-coenzyme A synthetase">
    <location>
        <begin position="1"/>
        <end position="662"/>
    </location>
</feature>
<feature type="binding site" evidence="1">
    <location>
        <begin position="197"/>
        <end position="200"/>
    </location>
    <ligand>
        <name>CoA</name>
        <dbReference type="ChEBI" id="CHEBI:57287"/>
    </ligand>
</feature>
<feature type="binding site" evidence="1">
    <location>
        <position position="317"/>
    </location>
    <ligand>
        <name>CoA</name>
        <dbReference type="ChEBI" id="CHEBI:57287"/>
    </ligand>
</feature>
<feature type="binding site" evidence="1">
    <location>
        <begin position="393"/>
        <end position="395"/>
    </location>
    <ligand>
        <name>ATP</name>
        <dbReference type="ChEBI" id="CHEBI:30616"/>
    </ligand>
</feature>
<feature type="binding site" evidence="1">
    <location>
        <begin position="417"/>
        <end position="422"/>
    </location>
    <ligand>
        <name>ATP</name>
        <dbReference type="ChEBI" id="CHEBI:30616"/>
    </ligand>
</feature>
<feature type="binding site" evidence="1">
    <location>
        <position position="510"/>
    </location>
    <ligand>
        <name>ATP</name>
        <dbReference type="ChEBI" id="CHEBI:30616"/>
    </ligand>
</feature>
<feature type="binding site" evidence="1">
    <location>
        <position position="525"/>
    </location>
    <ligand>
        <name>ATP</name>
        <dbReference type="ChEBI" id="CHEBI:30616"/>
    </ligand>
</feature>
<feature type="binding site" evidence="1">
    <location>
        <position position="533"/>
    </location>
    <ligand>
        <name>CoA</name>
        <dbReference type="ChEBI" id="CHEBI:57287"/>
    </ligand>
</feature>
<feature type="binding site" evidence="1">
    <location>
        <position position="536"/>
    </location>
    <ligand>
        <name>ATP</name>
        <dbReference type="ChEBI" id="CHEBI:30616"/>
    </ligand>
</feature>
<feature type="binding site" evidence="1">
    <location>
        <position position="549"/>
    </location>
    <ligand>
        <name>Mg(2+)</name>
        <dbReference type="ChEBI" id="CHEBI:18420"/>
    </ligand>
</feature>
<feature type="binding site" evidence="1">
    <location>
        <position position="552"/>
    </location>
    <ligand>
        <name>Mg(2+)</name>
        <dbReference type="ChEBI" id="CHEBI:18420"/>
    </ligand>
</feature>
<feature type="modified residue" description="N6-acetyllysine" evidence="1">
    <location>
        <position position="623"/>
    </location>
</feature>
<gene>
    <name evidence="1" type="primary">acsA</name>
    <name type="ordered locus">HPAG1_0402</name>
</gene>
<evidence type="ECO:0000255" key="1">
    <source>
        <dbReference type="HAMAP-Rule" id="MF_01123"/>
    </source>
</evidence>
<accession>Q1CUA3</accession>
<reference key="1">
    <citation type="journal article" date="2006" name="Proc. Natl. Acad. Sci. U.S.A.">
        <title>The complete genome sequence of a chronic atrophic gastritis Helicobacter pylori strain: evolution during disease progression.</title>
        <authorList>
            <person name="Oh J.D."/>
            <person name="Kling-Baeckhed H."/>
            <person name="Giannakis M."/>
            <person name="Xu J."/>
            <person name="Fulton R.S."/>
            <person name="Fulton L.A."/>
            <person name="Cordum H.S."/>
            <person name="Wang C."/>
            <person name="Elliott G."/>
            <person name="Edwards J."/>
            <person name="Mardis E.R."/>
            <person name="Engstrand L.G."/>
            <person name="Gordon J.I."/>
        </authorList>
    </citation>
    <scope>NUCLEOTIDE SEQUENCE [LARGE SCALE GENOMIC DNA]</scope>
    <source>
        <strain>HPAG1</strain>
    </source>
</reference>
<dbReference type="EC" id="6.2.1.1" evidence="1"/>
<dbReference type="EMBL" id="CP000241">
    <property type="protein sequence ID" value="ABF84469.1"/>
    <property type="molecule type" value="Genomic_DNA"/>
</dbReference>
<dbReference type="RefSeq" id="WP_001175382.1">
    <property type="nucleotide sequence ID" value="NC_008086.1"/>
</dbReference>
<dbReference type="SMR" id="Q1CUA3"/>
<dbReference type="KEGG" id="hpa:HPAG1_0402"/>
<dbReference type="HOGENOM" id="CLU_000022_3_6_7"/>
<dbReference type="GO" id="GO:0005829">
    <property type="term" value="C:cytosol"/>
    <property type="evidence" value="ECO:0007669"/>
    <property type="project" value="TreeGrafter"/>
</dbReference>
<dbReference type="GO" id="GO:0003987">
    <property type="term" value="F:acetate-CoA ligase activity"/>
    <property type="evidence" value="ECO:0007669"/>
    <property type="project" value="UniProtKB-UniRule"/>
</dbReference>
<dbReference type="GO" id="GO:0016208">
    <property type="term" value="F:AMP binding"/>
    <property type="evidence" value="ECO:0007669"/>
    <property type="project" value="InterPro"/>
</dbReference>
<dbReference type="GO" id="GO:0005524">
    <property type="term" value="F:ATP binding"/>
    <property type="evidence" value="ECO:0007669"/>
    <property type="project" value="UniProtKB-KW"/>
</dbReference>
<dbReference type="GO" id="GO:0046872">
    <property type="term" value="F:metal ion binding"/>
    <property type="evidence" value="ECO:0007669"/>
    <property type="project" value="UniProtKB-KW"/>
</dbReference>
<dbReference type="GO" id="GO:0019427">
    <property type="term" value="P:acetyl-CoA biosynthetic process from acetate"/>
    <property type="evidence" value="ECO:0007669"/>
    <property type="project" value="InterPro"/>
</dbReference>
<dbReference type="CDD" id="cd05966">
    <property type="entry name" value="ACS"/>
    <property type="match status" value="1"/>
</dbReference>
<dbReference type="FunFam" id="3.40.50.12780:FF:000001">
    <property type="entry name" value="Acetyl-coenzyme A synthetase"/>
    <property type="match status" value="1"/>
</dbReference>
<dbReference type="Gene3D" id="3.30.300.30">
    <property type="match status" value="1"/>
</dbReference>
<dbReference type="Gene3D" id="3.40.50.12780">
    <property type="entry name" value="N-terminal domain of ligase-like"/>
    <property type="match status" value="1"/>
</dbReference>
<dbReference type="HAMAP" id="MF_01123">
    <property type="entry name" value="Ac_CoA_synth"/>
    <property type="match status" value="1"/>
</dbReference>
<dbReference type="InterPro" id="IPR011904">
    <property type="entry name" value="Ac_CoA_lig"/>
</dbReference>
<dbReference type="InterPro" id="IPR032387">
    <property type="entry name" value="ACAS_N"/>
</dbReference>
<dbReference type="InterPro" id="IPR025110">
    <property type="entry name" value="AMP-bd_C"/>
</dbReference>
<dbReference type="InterPro" id="IPR045851">
    <property type="entry name" value="AMP-bd_C_sf"/>
</dbReference>
<dbReference type="InterPro" id="IPR020845">
    <property type="entry name" value="AMP-binding_CS"/>
</dbReference>
<dbReference type="InterPro" id="IPR000873">
    <property type="entry name" value="AMP-dep_synth/lig_dom"/>
</dbReference>
<dbReference type="InterPro" id="IPR042099">
    <property type="entry name" value="ANL_N_sf"/>
</dbReference>
<dbReference type="NCBIfam" id="TIGR02188">
    <property type="entry name" value="Ac_CoA_lig_AcsA"/>
    <property type="match status" value="1"/>
</dbReference>
<dbReference type="NCBIfam" id="NF001208">
    <property type="entry name" value="PRK00174.1"/>
    <property type="match status" value="1"/>
</dbReference>
<dbReference type="PANTHER" id="PTHR24095">
    <property type="entry name" value="ACETYL-COENZYME A SYNTHETASE"/>
    <property type="match status" value="1"/>
</dbReference>
<dbReference type="PANTHER" id="PTHR24095:SF14">
    <property type="entry name" value="ACETYL-COENZYME A SYNTHETASE 1"/>
    <property type="match status" value="1"/>
</dbReference>
<dbReference type="Pfam" id="PF16177">
    <property type="entry name" value="ACAS_N"/>
    <property type="match status" value="1"/>
</dbReference>
<dbReference type="Pfam" id="PF00501">
    <property type="entry name" value="AMP-binding"/>
    <property type="match status" value="1"/>
</dbReference>
<dbReference type="Pfam" id="PF13193">
    <property type="entry name" value="AMP-binding_C"/>
    <property type="match status" value="1"/>
</dbReference>
<dbReference type="SUPFAM" id="SSF56801">
    <property type="entry name" value="Acetyl-CoA synthetase-like"/>
    <property type="match status" value="1"/>
</dbReference>
<dbReference type="PROSITE" id="PS00455">
    <property type="entry name" value="AMP_BINDING"/>
    <property type="match status" value="1"/>
</dbReference>
<name>ACSA_HELPH</name>
<keyword id="KW-0007">Acetylation</keyword>
<keyword id="KW-0067">ATP-binding</keyword>
<keyword id="KW-0436">Ligase</keyword>
<keyword id="KW-0460">Magnesium</keyword>
<keyword id="KW-0479">Metal-binding</keyword>
<keyword id="KW-0547">Nucleotide-binding</keyword>
<proteinExistence type="inferred from homology"/>
<sequence>MQLDDDLEFAKKIFNPNRAFAKQARIKNMCEYKDLVHEANEDYEHFWGELAKQKLTWFKPFDKVLNSDNAPFFKWFENGKINVSYNCIDRHLKDKKNKVAIIFEGEMGDYNVITYRKLHSEVNKTANLLKNEFNVKKGDRVIIYMPMIVESVYMMLACARIGAIHSIVFAGFSPEALRDRINDAQAKLVITADGTFRKGKPYMLKPALDKALENNACPSVEKALIVIRNAKEIDYVRGRDFVYNEMVNYQSDKCEPEMMDSEDPLFLLYTSGSTGKPKGVQHSNAGYLLWAQMTMEWVFDIRDNDNFWCTADIGWITGHTYVVYGPLACGATTLILEGTMSYPDYGRWWRMIEEYRVDKFYTSPTAIRMLHAKGENEPLKYNLESLKVLGTVGEPINPTAWKWFYEKIGNSKCSIVDTWWQTETGGHIISPLPGATPIRASCATLPLPGIHAEVLNEDGTKTKPGEQGFLCITKPWPSMVRNIWGDEKRYIDSYFSQIKLNGEYVYLSGDGAIVDENGYITIIGRTDDIVNVSGHRIGTAEVESAISKHEMVVECAVVGIPDTIKGEGLFAFVVLCDGAKCNLGESLELLKEMNHILSVEIGKIAKLDNVMYVPGLPKTRSGKIMRRLLKSIAKKEPITQDLSTLEDVNVVKEIMSIVQMEE</sequence>
<organism>
    <name type="scientific">Helicobacter pylori (strain HPAG1)</name>
    <dbReference type="NCBI Taxonomy" id="357544"/>
    <lineage>
        <taxon>Bacteria</taxon>
        <taxon>Pseudomonadati</taxon>
        <taxon>Campylobacterota</taxon>
        <taxon>Epsilonproteobacteria</taxon>
        <taxon>Campylobacterales</taxon>
        <taxon>Helicobacteraceae</taxon>
        <taxon>Helicobacter</taxon>
    </lineage>
</organism>
<protein>
    <recommendedName>
        <fullName evidence="1">Acetyl-coenzyme A synthetase</fullName>
        <shortName evidence="1">AcCoA synthetase</shortName>
        <shortName evidence="1">Acs</shortName>
        <ecNumber evidence="1">6.2.1.1</ecNumber>
    </recommendedName>
    <alternativeName>
        <fullName evidence="1">Acetate--CoA ligase</fullName>
    </alternativeName>
    <alternativeName>
        <fullName evidence="1">Acyl-activating enzyme</fullName>
    </alternativeName>
</protein>
<comment type="function">
    <text evidence="1">Catalyzes the conversion of acetate into acetyl-CoA (AcCoA), an essential intermediate at the junction of anabolic and catabolic pathways. AcsA undergoes a two-step reaction. In the first half reaction, AcsA combines acetate with ATP to form acetyl-adenylate (AcAMP) intermediate. In the second half reaction, it can then transfer the acetyl group from AcAMP to the sulfhydryl group of CoA, forming the product AcCoA.</text>
</comment>
<comment type="catalytic activity">
    <reaction evidence="1">
        <text>acetate + ATP + CoA = acetyl-CoA + AMP + diphosphate</text>
        <dbReference type="Rhea" id="RHEA:23176"/>
        <dbReference type="ChEBI" id="CHEBI:30089"/>
        <dbReference type="ChEBI" id="CHEBI:30616"/>
        <dbReference type="ChEBI" id="CHEBI:33019"/>
        <dbReference type="ChEBI" id="CHEBI:57287"/>
        <dbReference type="ChEBI" id="CHEBI:57288"/>
        <dbReference type="ChEBI" id="CHEBI:456215"/>
        <dbReference type="EC" id="6.2.1.1"/>
    </reaction>
</comment>
<comment type="cofactor">
    <cofactor evidence="1">
        <name>Mg(2+)</name>
        <dbReference type="ChEBI" id="CHEBI:18420"/>
    </cofactor>
</comment>
<comment type="PTM">
    <text evidence="1">Acetylated. Deacetylation by the SIR2-homolog deacetylase activates the enzyme.</text>
</comment>
<comment type="similarity">
    <text evidence="1">Belongs to the ATP-dependent AMP-binding enzyme family.</text>
</comment>